<organism>
    <name type="scientific">Burkholderia vietnamiensis (strain G4 / LMG 22486)</name>
    <name type="common">Burkholderia cepacia (strain R1808)</name>
    <dbReference type="NCBI Taxonomy" id="269482"/>
    <lineage>
        <taxon>Bacteria</taxon>
        <taxon>Pseudomonadati</taxon>
        <taxon>Pseudomonadota</taxon>
        <taxon>Betaproteobacteria</taxon>
        <taxon>Burkholderiales</taxon>
        <taxon>Burkholderiaceae</taxon>
        <taxon>Burkholderia</taxon>
        <taxon>Burkholderia cepacia complex</taxon>
    </lineage>
</organism>
<name>EFP_BURVG</name>
<protein>
    <recommendedName>
        <fullName evidence="1">Elongation factor P</fullName>
        <shortName evidence="1">EF-P</shortName>
    </recommendedName>
</protein>
<gene>
    <name evidence="1" type="primary">efp</name>
    <name type="ordered locus">Bcep1808_1060</name>
</gene>
<accession>A4JCR8</accession>
<sequence>MKTAQELRVGNVVQIGSDAWVIAKTEYNKSGRNAAVVKMKMKNLLTNAGQEAVYKADDKFDVVVLDRKEVTYSYFADPMYVFMDADYNQYEVEAEMMGEALNYLEDGMACEVVFYNEKAISVELPTILVREITYTEPAVKGDTSSGKVLKNAKLATGFELQVPLFCNTGDKIEIDTRTNEYRSRA</sequence>
<reference key="1">
    <citation type="submission" date="2007-03" db="EMBL/GenBank/DDBJ databases">
        <title>Complete sequence of chromosome 1 of Burkholderia vietnamiensis G4.</title>
        <authorList>
            <consortium name="US DOE Joint Genome Institute"/>
            <person name="Copeland A."/>
            <person name="Lucas S."/>
            <person name="Lapidus A."/>
            <person name="Barry K."/>
            <person name="Detter J.C."/>
            <person name="Glavina del Rio T."/>
            <person name="Hammon N."/>
            <person name="Israni S."/>
            <person name="Dalin E."/>
            <person name="Tice H."/>
            <person name="Pitluck S."/>
            <person name="Chain P."/>
            <person name="Malfatti S."/>
            <person name="Shin M."/>
            <person name="Vergez L."/>
            <person name="Schmutz J."/>
            <person name="Larimer F."/>
            <person name="Land M."/>
            <person name="Hauser L."/>
            <person name="Kyrpides N."/>
            <person name="Tiedje J."/>
            <person name="Richardson P."/>
        </authorList>
    </citation>
    <scope>NUCLEOTIDE SEQUENCE [LARGE SCALE GENOMIC DNA]</scope>
    <source>
        <strain>G4 / LMG 22486</strain>
    </source>
</reference>
<keyword id="KW-0963">Cytoplasm</keyword>
<keyword id="KW-0251">Elongation factor</keyword>
<keyword id="KW-0648">Protein biosynthesis</keyword>
<proteinExistence type="inferred from homology"/>
<comment type="function">
    <text evidence="1">Involved in peptide bond synthesis. Stimulates efficient translation and peptide-bond synthesis on native or reconstituted 70S ribosomes in vitro. Probably functions indirectly by altering the affinity of the ribosome for aminoacyl-tRNA, thus increasing their reactivity as acceptors for peptidyl transferase.</text>
</comment>
<comment type="pathway">
    <text evidence="1">Protein biosynthesis; polypeptide chain elongation.</text>
</comment>
<comment type="subcellular location">
    <subcellularLocation>
        <location evidence="1">Cytoplasm</location>
    </subcellularLocation>
</comment>
<comment type="similarity">
    <text evidence="1">Belongs to the elongation factor P family.</text>
</comment>
<dbReference type="EMBL" id="CP000614">
    <property type="protein sequence ID" value="ABO54071.1"/>
    <property type="molecule type" value="Genomic_DNA"/>
</dbReference>
<dbReference type="SMR" id="A4JCR8"/>
<dbReference type="KEGG" id="bvi:Bcep1808_1060"/>
<dbReference type="eggNOG" id="COG0231">
    <property type="taxonomic scope" value="Bacteria"/>
</dbReference>
<dbReference type="HOGENOM" id="CLU_074944_2_1_4"/>
<dbReference type="UniPathway" id="UPA00345"/>
<dbReference type="Proteomes" id="UP000002287">
    <property type="component" value="Chromosome 1"/>
</dbReference>
<dbReference type="GO" id="GO:0005737">
    <property type="term" value="C:cytoplasm"/>
    <property type="evidence" value="ECO:0007669"/>
    <property type="project" value="UniProtKB-SubCell"/>
</dbReference>
<dbReference type="GO" id="GO:0003746">
    <property type="term" value="F:translation elongation factor activity"/>
    <property type="evidence" value="ECO:0007669"/>
    <property type="project" value="UniProtKB-UniRule"/>
</dbReference>
<dbReference type="GO" id="GO:0043043">
    <property type="term" value="P:peptide biosynthetic process"/>
    <property type="evidence" value="ECO:0007669"/>
    <property type="project" value="InterPro"/>
</dbReference>
<dbReference type="CDD" id="cd04470">
    <property type="entry name" value="S1_EF-P_repeat_1"/>
    <property type="match status" value="1"/>
</dbReference>
<dbReference type="CDD" id="cd05794">
    <property type="entry name" value="S1_EF-P_repeat_2"/>
    <property type="match status" value="1"/>
</dbReference>
<dbReference type="FunFam" id="2.30.30.30:FF:000003">
    <property type="entry name" value="Elongation factor P"/>
    <property type="match status" value="1"/>
</dbReference>
<dbReference type="FunFam" id="2.40.50.140:FF:000004">
    <property type="entry name" value="Elongation factor P"/>
    <property type="match status" value="1"/>
</dbReference>
<dbReference type="FunFam" id="2.40.50.140:FF:000009">
    <property type="entry name" value="Elongation factor P"/>
    <property type="match status" value="1"/>
</dbReference>
<dbReference type="Gene3D" id="2.30.30.30">
    <property type="match status" value="1"/>
</dbReference>
<dbReference type="Gene3D" id="2.40.50.140">
    <property type="entry name" value="Nucleic acid-binding proteins"/>
    <property type="match status" value="2"/>
</dbReference>
<dbReference type="HAMAP" id="MF_00141">
    <property type="entry name" value="EF_P"/>
    <property type="match status" value="1"/>
</dbReference>
<dbReference type="InterPro" id="IPR015365">
    <property type="entry name" value="Elong-fact-P_C"/>
</dbReference>
<dbReference type="InterPro" id="IPR012340">
    <property type="entry name" value="NA-bd_OB-fold"/>
</dbReference>
<dbReference type="InterPro" id="IPR014722">
    <property type="entry name" value="Rib_uL2_dom2"/>
</dbReference>
<dbReference type="InterPro" id="IPR020599">
    <property type="entry name" value="Transl_elong_fac_P/YeiP"/>
</dbReference>
<dbReference type="InterPro" id="IPR013185">
    <property type="entry name" value="Transl_elong_KOW-like"/>
</dbReference>
<dbReference type="InterPro" id="IPR001059">
    <property type="entry name" value="Transl_elong_P/YeiP_cen"/>
</dbReference>
<dbReference type="InterPro" id="IPR013852">
    <property type="entry name" value="Transl_elong_P/YeiP_CS"/>
</dbReference>
<dbReference type="InterPro" id="IPR011768">
    <property type="entry name" value="Transl_elongation_fac_P"/>
</dbReference>
<dbReference type="InterPro" id="IPR008991">
    <property type="entry name" value="Translation_prot_SH3-like_sf"/>
</dbReference>
<dbReference type="NCBIfam" id="TIGR00038">
    <property type="entry name" value="efp"/>
    <property type="match status" value="1"/>
</dbReference>
<dbReference type="NCBIfam" id="NF001810">
    <property type="entry name" value="PRK00529.1"/>
    <property type="match status" value="1"/>
</dbReference>
<dbReference type="PANTHER" id="PTHR30053">
    <property type="entry name" value="ELONGATION FACTOR P"/>
    <property type="match status" value="1"/>
</dbReference>
<dbReference type="PANTHER" id="PTHR30053:SF12">
    <property type="entry name" value="ELONGATION FACTOR P (EF-P) FAMILY PROTEIN"/>
    <property type="match status" value="1"/>
</dbReference>
<dbReference type="Pfam" id="PF01132">
    <property type="entry name" value="EFP"/>
    <property type="match status" value="1"/>
</dbReference>
<dbReference type="Pfam" id="PF08207">
    <property type="entry name" value="EFP_N"/>
    <property type="match status" value="1"/>
</dbReference>
<dbReference type="Pfam" id="PF09285">
    <property type="entry name" value="Elong-fact-P_C"/>
    <property type="match status" value="1"/>
</dbReference>
<dbReference type="PIRSF" id="PIRSF005901">
    <property type="entry name" value="EF-P"/>
    <property type="match status" value="1"/>
</dbReference>
<dbReference type="SMART" id="SM01185">
    <property type="entry name" value="EFP"/>
    <property type="match status" value="1"/>
</dbReference>
<dbReference type="SMART" id="SM00841">
    <property type="entry name" value="Elong-fact-P_C"/>
    <property type="match status" value="1"/>
</dbReference>
<dbReference type="SUPFAM" id="SSF50249">
    <property type="entry name" value="Nucleic acid-binding proteins"/>
    <property type="match status" value="2"/>
</dbReference>
<dbReference type="SUPFAM" id="SSF50104">
    <property type="entry name" value="Translation proteins SH3-like domain"/>
    <property type="match status" value="1"/>
</dbReference>
<dbReference type="PROSITE" id="PS01275">
    <property type="entry name" value="EFP"/>
    <property type="match status" value="1"/>
</dbReference>
<feature type="chain" id="PRO_1000010705" description="Elongation factor P">
    <location>
        <begin position="1"/>
        <end position="185"/>
    </location>
</feature>
<evidence type="ECO:0000255" key="1">
    <source>
        <dbReference type="HAMAP-Rule" id="MF_00141"/>
    </source>
</evidence>